<comment type="function">
    <text evidence="1">Tetrapolymerization of the monopyrrole PBG into the hydroxymethylbilane pre-uroporphyrinogen in several discrete steps.</text>
</comment>
<comment type="catalytic activity">
    <reaction evidence="1">
        <text>4 porphobilinogen + H2O = hydroxymethylbilane + 4 NH4(+)</text>
        <dbReference type="Rhea" id="RHEA:13185"/>
        <dbReference type="ChEBI" id="CHEBI:15377"/>
        <dbReference type="ChEBI" id="CHEBI:28938"/>
        <dbReference type="ChEBI" id="CHEBI:57845"/>
        <dbReference type="ChEBI" id="CHEBI:58126"/>
        <dbReference type="EC" id="2.5.1.61"/>
    </reaction>
</comment>
<comment type="cofactor">
    <cofactor evidence="1">
        <name>dipyrromethane</name>
        <dbReference type="ChEBI" id="CHEBI:60342"/>
    </cofactor>
    <text evidence="1">Binds 1 dipyrromethane group covalently.</text>
</comment>
<comment type="pathway">
    <text evidence="1">Porphyrin-containing compound metabolism; protoporphyrin-IX biosynthesis; coproporphyrinogen-III from 5-aminolevulinate: step 2/4.</text>
</comment>
<comment type="subunit">
    <text evidence="1">Monomer.</text>
</comment>
<comment type="miscellaneous">
    <text evidence="1">The porphobilinogen subunits are added to the dipyrromethane group.</text>
</comment>
<comment type="similarity">
    <text evidence="1">Belongs to the HMBS family.</text>
</comment>
<name>HEM3_PELTS</name>
<gene>
    <name evidence="1" type="primary">hemC</name>
    <name type="ordered locus">PTH_0972</name>
</gene>
<keyword id="KW-0627">Porphyrin biosynthesis</keyword>
<keyword id="KW-1185">Reference proteome</keyword>
<keyword id="KW-0808">Transferase</keyword>
<organism>
    <name type="scientific">Pelotomaculum thermopropionicum (strain DSM 13744 / JCM 10971 / SI)</name>
    <dbReference type="NCBI Taxonomy" id="370438"/>
    <lineage>
        <taxon>Bacteria</taxon>
        <taxon>Bacillati</taxon>
        <taxon>Bacillota</taxon>
        <taxon>Clostridia</taxon>
        <taxon>Eubacteriales</taxon>
        <taxon>Desulfotomaculaceae</taxon>
        <taxon>Pelotomaculum</taxon>
    </lineage>
</organism>
<reference key="1">
    <citation type="journal article" date="2008" name="Genome Res.">
        <title>The genome of Pelotomaculum thermopropionicum reveals niche-associated evolution in anaerobic microbiota.</title>
        <authorList>
            <person name="Kosaka T."/>
            <person name="Kato S."/>
            <person name="Shimoyama T."/>
            <person name="Ishii S."/>
            <person name="Abe T."/>
            <person name="Watanabe K."/>
        </authorList>
    </citation>
    <scope>NUCLEOTIDE SEQUENCE [LARGE SCALE GENOMIC DNA]</scope>
    <source>
        <strain>DSM 13744 / JCM 10971 / SI</strain>
    </source>
</reference>
<protein>
    <recommendedName>
        <fullName evidence="1">Porphobilinogen deaminase</fullName>
        <shortName evidence="1">PBG</shortName>
        <ecNumber evidence="1">2.5.1.61</ecNumber>
    </recommendedName>
    <alternativeName>
        <fullName evidence="1">Hydroxymethylbilane synthase</fullName>
        <shortName evidence="1">HMBS</shortName>
    </alternativeName>
    <alternativeName>
        <fullName evidence="1">Pre-uroporphyrinogen synthase</fullName>
    </alternativeName>
</protein>
<evidence type="ECO:0000255" key="1">
    <source>
        <dbReference type="HAMAP-Rule" id="MF_00260"/>
    </source>
</evidence>
<feature type="chain" id="PRO_1000078613" description="Porphobilinogen deaminase">
    <location>
        <begin position="1"/>
        <end position="312"/>
    </location>
</feature>
<feature type="modified residue" description="S-(dipyrrolylmethanemethyl)cysteine" evidence="1">
    <location>
        <position position="241"/>
    </location>
</feature>
<accession>A5D3L5</accession>
<dbReference type="EC" id="2.5.1.61" evidence="1"/>
<dbReference type="EMBL" id="AP009389">
    <property type="protein sequence ID" value="BAF59153.1"/>
    <property type="molecule type" value="Genomic_DNA"/>
</dbReference>
<dbReference type="SMR" id="A5D3L5"/>
<dbReference type="STRING" id="370438.PTH_0972"/>
<dbReference type="KEGG" id="pth:PTH_0972"/>
<dbReference type="eggNOG" id="COG0181">
    <property type="taxonomic scope" value="Bacteria"/>
</dbReference>
<dbReference type="HOGENOM" id="CLU_019704_0_2_9"/>
<dbReference type="UniPathway" id="UPA00251">
    <property type="reaction ID" value="UER00319"/>
</dbReference>
<dbReference type="Proteomes" id="UP000006556">
    <property type="component" value="Chromosome"/>
</dbReference>
<dbReference type="GO" id="GO:0005737">
    <property type="term" value="C:cytoplasm"/>
    <property type="evidence" value="ECO:0007669"/>
    <property type="project" value="TreeGrafter"/>
</dbReference>
<dbReference type="GO" id="GO:0004418">
    <property type="term" value="F:hydroxymethylbilane synthase activity"/>
    <property type="evidence" value="ECO:0007669"/>
    <property type="project" value="UniProtKB-UniRule"/>
</dbReference>
<dbReference type="GO" id="GO:0006782">
    <property type="term" value="P:protoporphyrinogen IX biosynthetic process"/>
    <property type="evidence" value="ECO:0007669"/>
    <property type="project" value="UniProtKB-UniRule"/>
</dbReference>
<dbReference type="CDD" id="cd13646">
    <property type="entry name" value="PBP2_EcHMBS_like"/>
    <property type="match status" value="1"/>
</dbReference>
<dbReference type="FunFam" id="3.30.160.40:FF:000002">
    <property type="entry name" value="Porphobilinogen deaminase"/>
    <property type="match status" value="1"/>
</dbReference>
<dbReference type="FunFam" id="3.40.190.10:FF:000004">
    <property type="entry name" value="Porphobilinogen deaminase"/>
    <property type="match status" value="1"/>
</dbReference>
<dbReference type="FunFam" id="3.40.190.10:FF:000005">
    <property type="entry name" value="Porphobilinogen deaminase"/>
    <property type="match status" value="1"/>
</dbReference>
<dbReference type="Gene3D" id="3.40.190.10">
    <property type="entry name" value="Periplasmic binding protein-like II"/>
    <property type="match status" value="2"/>
</dbReference>
<dbReference type="Gene3D" id="3.30.160.40">
    <property type="entry name" value="Porphobilinogen deaminase, C-terminal domain"/>
    <property type="match status" value="1"/>
</dbReference>
<dbReference type="HAMAP" id="MF_00260">
    <property type="entry name" value="Porphobil_deam"/>
    <property type="match status" value="1"/>
</dbReference>
<dbReference type="InterPro" id="IPR000860">
    <property type="entry name" value="HemC"/>
</dbReference>
<dbReference type="InterPro" id="IPR022419">
    <property type="entry name" value="Porphobilin_deaminase_cofac_BS"/>
</dbReference>
<dbReference type="InterPro" id="IPR022417">
    <property type="entry name" value="Porphobilin_deaminase_N"/>
</dbReference>
<dbReference type="InterPro" id="IPR022418">
    <property type="entry name" value="Porphobilinogen_deaminase_C"/>
</dbReference>
<dbReference type="InterPro" id="IPR036803">
    <property type="entry name" value="Porphobilinogen_deaminase_C_sf"/>
</dbReference>
<dbReference type="NCBIfam" id="TIGR00212">
    <property type="entry name" value="hemC"/>
    <property type="match status" value="1"/>
</dbReference>
<dbReference type="PANTHER" id="PTHR11557">
    <property type="entry name" value="PORPHOBILINOGEN DEAMINASE"/>
    <property type="match status" value="1"/>
</dbReference>
<dbReference type="PANTHER" id="PTHR11557:SF0">
    <property type="entry name" value="PORPHOBILINOGEN DEAMINASE"/>
    <property type="match status" value="1"/>
</dbReference>
<dbReference type="Pfam" id="PF01379">
    <property type="entry name" value="Porphobil_deam"/>
    <property type="match status" value="1"/>
</dbReference>
<dbReference type="Pfam" id="PF03900">
    <property type="entry name" value="Porphobil_deamC"/>
    <property type="match status" value="1"/>
</dbReference>
<dbReference type="PIRSF" id="PIRSF001438">
    <property type="entry name" value="4pyrrol_synth_OHMeBilane_synth"/>
    <property type="match status" value="1"/>
</dbReference>
<dbReference type="PRINTS" id="PR00151">
    <property type="entry name" value="PORPHBDMNASE"/>
</dbReference>
<dbReference type="SUPFAM" id="SSF53850">
    <property type="entry name" value="Periplasmic binding protein-like II"/>
    <property type="match status" value="1"/>
</dbReference>
<dbReference type="SUPFAM" id="SSF54782">
    <property type="entry name" value="Porphobilinogen deaminase (hydroxymethylbilane synthase), C-terminal domain"/>
    <property type="match status" value="1"/>
</dbReference>
<dbReference type="PROSITE" id="PS00533">
    <property type="entry name" value="PORPHOBILINOGEN_DEAM"/>
    <property type="match status" value="1"/>
</dbReference>
<sequence>MKREIAVGTRVSKLAMWQARWVVDRLKELCPGCSFRIVGIRTLGDRILDAALVKIGDKGLFTKELEAAMLRGEIDMAVHSMKDLPTELPEGLVIGAVCKREHPADVLVSRRGKKLDELPGGALVGTSSLRRCAQLLWYRDDLRMVNLRGNINTRLRKLEEENLDAAVLAYAGLFRMGRQDAITQVIPFDICLPAVGQGSIGVEVRSDDGEVLELVKKIDHRESRLAVFAERAFLRRLEGGCQVPVGALGTVENDRLRLEGVVATPDGKQLVRSFVEGNGGDAAAIGLRLAEKLLELGAGEILKRARQEERRE</sequence>
<proteinExistence type="inferred from homology"/>